<evidence type="ECO:0000250" key="1">
    <source>
        <dbReference type="UniProtKB" id="D5ARP7"/>
    </source>
</evidence>
<evidence type="ECO:0000250" key="2">
    <source>
        <dbReference type="UniProtKB" id="D9IA45"/>
    </source>
</evidence>
<evidence type="ECO:0000250" key="3">
    <source>
        <dbReference type="UniProtKB" id="Q03075"/>
    </source>
</evidence>
<evidence type="ECO:0000250" key="4">
    <source>
        <dbReference type="UniProtKB" id="Q3J015"/>
    </source>
</evidence>
<evidence type="ECO:0000250" key="5">
    <source>
        <dbReference type="UniProtKB" id="Q52689"/>
    </source>
</evidence>
<evidence type="ECO:0000250" key="6">
    <source>
        <dbReference type="UniProtKB" id="Q8KS19"/>
    </source>
</evidence>
<evidence type="ECO:0000255" key="7"/>
<evidence type="ECO:0000255" key="8">
    <source>
        <dbReference type="PROSITE-ProRule" id="PRU00433"/>
    </source>
</evidence>
<evidence type="ECO:0000269" key="9">
    <source>
    </source>
</evidence>
<evidence type="ECO:0000305" key="10"/>
<evidence type="ECO:0000312" key="11">
    <source>
        <dbReference type="EMBL" id="AAC15890.1"/>
    </source>
</evidence>
<evidence type="ECO:0000312" key="12">
    <source>
        <dbReference type="EMBL" id="AAM54763.1"/>
    </source>
</evidence>
<comment type="function">
    <text evidence="2 3 9">C-type cytochrome. Part of the cbb3-type cytochrome c oxidase complex. FixP subunit is required for transferring electrons from donor cytochrome c via its heme groups to FixO subunit. From there, electrons are shuttled to the catalytic binuclear center of FixN subunit where oxygen reduction takes place. The complex also functions as a proton pump.</text>
</comment>
<comment type="cofactor">
    <cofactor evidence="2">
        <name>heme c</name>
        <dbReference type="ChEBI" id="CHEBI:61717"/>
    </cofactor>
    <text evidence="2">Binds 2 heme C groups per subunit.</text>
</comment>
<comment type="pathway">
    <text evidence="1">Energy metabolism; oxidative phosphorylation.</text>
</comment>
<comment type="subunit">
    <text evidence="1">Component of the cbb3-type cytochrome c oxidase at least composed of FixN, FixO, FixQ and FixP.</text>
</comment>
<comment type="subcellular location">
    <subcellularLocation>
        <location evidence="6 7">Cell inner membrane</location>
        <topology evidence="6 7">Single-pass membrane protein</topology>
    </subcellularLocation>
</comment>
<comment type="similarity">
    <text evidence="10">Belongs to the CcoP / FixP family.</text>
</comment>
<feature type="chain" id="PRO_0000412298" description="Cbb3-type cytochrome c oxidase subunit FixP">
    <location>
        <begin position="1"/>
        <end position="287"/>
    </location>
</feature>
<feature type="topological domain" description="Cytoplasmic" evidence="4 7">
    <location>
        <begin position="1"/>
        <end position="33"/>
    </location>
</feature>
<feature type="transmembrane region" description="Helical" evidence="7">
    <location>
        <begin position="34"/>
        <end position="54"/>
    </location>
</feature>
<feature type="topological domain" description="Periplasmic" evidence="4 7">
    <location>
        <begin position="55"/>
        <end position="287"/>
    </location>
</feature>
<feature type="domain" description="Cytochrome c 1" evidence="8">
    <location>
        <begin position="108"/>
        <end position="196"/>
    </location>
</feature>
<feature type="domain" description="Cytochrome c 2" evidence="8">
    <location>
        <begin position="203"/>
        <end position="284"/>
    </location>
</feature>
<feature type="binding site" description="covalent" evidence="2">
    <location>
        <position position="121"/>
    </location>
    <ligand>
        <name>heme c</name>
        <dbReference type="ChEBI" id="CHEBI:61717"/>
        <label>1</label>
    </ligand>
</feature>
<feature type="binding site" description="covalent" evidence="2">
    <location>
        <position position="124"/>
    </location>
    <ligand>
        <name>heme c</name>
        <dbReference type="ChEBI" id="CHEBI:61717"/>
        <label>1</label>
    </ligand>
</feature>
<feature type="binding site" description="axial binding residue" evidence="2">
    <location>
        <position position="125"/>
    </location>
    <ligand>
        <name>heme c</name>
        <dbReference type="ChEBI" id="CHEBI:61717"/>
        <label>1</label>
    </ligand>
    <ligandPart>
        <name>Fe</name>
        <dbReference type="ChEBI" id="CHEBI:18248"/>
    </ligandPart>
</feature>
<feature type="binding site" description="axial binding residue" evidence="2">
    <location>
        <position position="173"/>
    </location>
    <ligand>
        <name>heme c</name>
        <dbReference type="ChEBI" id="CHEBI:61717"/>
        <label>2</label>
    </ligand>
    <ligandPart>
        <name>Fe</name>
        <dbReference type="ChEBI" id="CHEBI:18248"/>
    </ligandPart>
</feature>
<feature type="binding site" description="covalent" evidence="2">
    <location>
        <position position="216"/>
    </location>
    <ligand>
        <name>heme c</name>
        <dbReference type="ChEBI" id="CHEBI:61717"/>
        <label>2</label>
    </ligand>
</feature>
<feature type="binding site" description="covalent" evidence="2">
    <location>
        <position position="219"/>
    </location>
    <ligand>
        <name>heme c</name>
        <dbReference type="ChEBI" id="CHEBI:61717"/>
        <label>2</label>
    </ligand>
</feature>
<feature type="binding site" description="axial binding residue" evidence="2">
    <location>
        <position position="220"/>
    </location>
    <ligand>
        <name>heme c</name>
        <dbReference type="ChEBI" id="CHEBI:61717"/>
        <label>2</label>
    </ligand>
    <ligandPart>
        <name>Fe</name>
        <dbReference type="ChEBI" id="CHEBI:18248"/>
    </ligandPart>
</feature>
<feature type="binding site" description="axial binding residue" evidence="2">
    <location>
        <position position="261"/>
    </location>
    <ligand>
        <name>heme c</name>
        <dbReference type="ChEBI" id="CHEBI:61717"/>
        <label>1</label>
    </ligand>
    <ligandPart>
        <name>Fe</name>
        <dbReference type="ChEBI" id="CHEBI:18248"/>
    </ligandPart>
</feature>
<feature type="sequence variant" description="In strain: CE3." evidence="9">
    <original>GV</original>
    <variation>VA</variation>
    <location>
        <begin position="11"/>
        <end position="12"/>
    </location>
</feature>
<feature type="sequence variant" description="In strain: CE3.">
    <original>W</original>
    <variation>C</variation>
    <location>
        <position position="43"/>
    </location>
</feature>
<feature type="sequence variant" description="In strain: CE3." evidence="9">
    <original>IG</original>
    <variation>DP</variation>
    <location>
        <begin position="45"/>
        <end position="46"/>
    </location>
</feature>
<feature type="sequence variant" description="In strain: CE3." evidence="9">
    <original>DA</original>
    <variation>EP</variation>
    <location>
        <begin position="247"/>
        <end position="248"/>
    </location>
</feature>
<feature type="sequence variant" description="In strain: CE3." evidence="9">
    <original>I</original>
    <variation>N</variation>
    <location>
        <position position="278"/>
    </location>
</feature>
<feature type="sequence variant" description="In strain: CE3." evidence="9">
    <original>AL</original>
    <variation>RF</variation>
    <location>
        <begin position="282"/>
        <end position="283"/>
    </location>
</feature>
<sequence length="287" mass="30767">MSQKHIDELSGVETTGHEWDGIQELNNPMPRWWIWTFYVTILWAIGYAIAYPAIPMITSATNGYLGYSTRAELQQDLNLAKSSQTEFHDLIAAKTVEEIDADPALRKFAIAGGASAFKVNCAPCHGSGASGGPGFPNLNDDDWLWGGDLNAIQATISHGIRFDGDTDSHSSEMPPFAGVLEPIQMKQVAAFVWGLTNTPSDVGLAAAGKQVFFDNCAPCHGEDAKGKVEMGAPDLADAIWLKSRGEDAILRQVASPKHGVMPAWAARLGDTTVNELTIFVHALGGGT</sequence>
<gene>
    <name evidence="11" type="primary">fixP</name>
    <name type="ordered locus">RHE_PD00293</name>
</gene>
<proteinExistence type="inferred from homology"/>
<protein>
    <recommendedName>
        <fullName evidence="12">Cbb3-type cytochrome c oxidase subunit FixP</fullName>
        <shortName evidence="1">Cbb3-Cox subunit FixP</shortName>
    </recommendedName>
    <alternativeName>
        <fullName evidence="5">C-type cytochrome FixP</fullName>
        <shortName evidence="1">Cyt c(FixP)</shortName>
    </alternativeName>
    <alternativeName>
        <fullName evidence="12">Cytochrome c oxidase subunit III</fullName>
    </alternativeName>
</protein>
<keyword id="KW-0997">Cell inner membrane</keyword>
<keyword id="KW-1003">Cell membrane</keyword>
<keyword id="KW-0249">Electron transport</keyword>
<keyword id="KW-0349">Heme</keyword>
<keyword id="KW-0375">Hydrogen ion transport</keyword>
<keyword id="KW-0406">Ion transport</keyword>
<keyword id="KW-0408">Iron</keyword>
<keyword id="KW-0472">Membrane</keyword>
<keyword id="KW-0479">Metal-binding</keyword>
<keyword id="KW-0560">Oxidoreductase</keyword>
<keyword id="KW-0614">Plasmid</keyword>
<keyword id="KW-1185">Reference proteome</keyword>
<keyword id="KW-0677">Repeat</keyword>
<keyword id="KW-0679">Respiratory chain</keyword>
<keyword id="KW-0812">Transmembrane</keyword>
<keyword id="KW-1133">Transmembrane helix</keyword>
<keyword id="KW-0813">Transport</keyword>
<reference evidence="10 11" key="1">
    <citation type="journal article" date="1999" name="Appl. Environ. Microbiol.">
        <title>Enhanced nitrogen fixation in a rhizobium etli ntrC mutant that overproduces the bradyrhizobium japonicum symbiotic terminal oxidase cbb3.</title>
        <authorList>
            <person name="Soberon M."/>
            <person name="Lopez O."/>
            <person name="Morera C."/>
            <person name="Girard M.L."/>
            <person name="Tabche M.L."/>
            <person name="Miranda J."/>
        </authorList>
    </citation>
    <scope>NUCLEOTIDE SEQUENCE [GENOMIC DNA]</scope>
    <scope>FUNCTION</scope>
    <source>
        <strain evidence="11">CE3</strain>
    </source>
</reference>
<reference evidence="12" key="2">
    <citation type="journal article" date="2003" name="Genome Biol.">
        <title>The mosaic structure of the symbiotic plasmid of Rhizobium etli CFN42 and its relation to other symbiotic genome compartments.</title>
        <authorList>
            <person name="Gonzalez V."/>
            <person name="Bustos P."/>
            <person name="Ramirez-Romero M.A."/>
            <person name="Medrano-Soto A."/>
            <person name="Salgado H."/>
            <person name="Hernandez-Gonzalez I."/>
            <person name="Hernandez-Celis J.C."/>
            <person name="Quintero V."/>
            <person name="Moreno-Hagelsieb G."/>
            <person name="Girard L."/>
            <person name="Rodriguez O."/>
            <person name="Flores M."/>
            <person name="Cevallos M.A."/>
            <person name="Collado-Vides J."/>
            <person name="Romero D."/>
            <person name="Davila G."/>
        </authorList>
    </citation>
    <scope>NUCLEOTIDE SEQUENCE [LARGE SCALE GENOMIC DNA]</scope>
    <source>
        <strain evidence="12">ATCC 51251 / DSM 11541 / JCM 21823 / NBRC 15573 / CFN 42</strain>
    </source>
</reference>
<reference evidence="12" key="3">
    <citation type="journal article" date="2006" name="Proc. Natl. Acad. Sci. U.S.A.">
        <title>The partitioned Rhizobium etli genome: genetic and metabolic redundancy in seven interacting replicons.</title>
        <authorList>
            <person name="Gonzalez V."/>
            <person name="Santamaria R.I."/>
            <person name="Bustos P."/>
            <person name="Hernandez-Gonzalez I."/>
            <person name="Medrano-Soto A."/>
            <person name="Moreno-Hagelsieb G."/>
            <person name="Janga S.C."/>
            <person name="Ramirez M.A."/>
            <person name="Jimenez-Jacinto V."/>
            <person name="Collado-Vides J."/>
            <person name="Davila G."/>
        </authorList>
    </citation>
    <scope>NUCLEOTIDE SEQUENCE [LARGE SCALE GENOMIC DNA]</scope>
    <source>
        <strain evidence="12">ATCC 51251 / DSM 11541 / JCM 21823 / NBRC 15573 / CFN 42</strain>
    </source>
</reference>
<name>FIXP_RHIEC</name>
<dbReference type="EMBL" id="U76906">
    <property type="protein sequence ID" value="AAC15890.1"/>
    <property type="molecule type" value="Genomic_DNA"/>
</dbReference>
<dbReference type="EMBL" id="U80928">
    <property type="protein sequence ID" value="AAM54763.1"/>
    <property type="molecule type" value="Genomic_DNA"/>
</dbReference>
<dbReference type="SMR" id="Q8KLH5"/>
<dbReference type="KEGG" id="ret:RHE_PD00293"/>
<dbReference type="HOGENOM" id="CLU_047545_2_0_5"/>
<dbReference type="OrthoDB" id="9811281at2"/>
<dbReference type="UniPathway" id="UPA00705"/>
<dbReference type="Proteomes" id="UP000001936">
    <property type="component" value="Plasmid p42d"/>
</dbReference>
<dbReference type="GO" id="GO:0005886">
    <property type="term" value="C:plasma membrane"/>
    <property type="evidence" value="ECO:0007669"/>
    <property type="project" value="UniProtKB-SubCell"/>
</dbReference>
<dbReference type="GO" id="GO:0009055">
    <property type="term" value="F:electron transfer activity"/>
    <property type="evidence" value="ECO:0007669"/>
    <property type="project" value="InterPro"/>
</dbReference>
<dbReference type="GO" id="GO:0020037">
    <property type="term" value="F:heme binding"/>
    <property type="evidence" value="ECO:0007669"/>
    <property type="project" value="InterPro"/>
</dbReference>
<dbReference type="GO" id="GO:0005506">
    <property type="term" value="F:iron ion binding"/>
    <property type="evidence" value="ECO:0007669"/>
    <property type="project" value="InterPro"/>
</dbReference>
<dbReference type="GO" id="GO:0016491">
    <property type="term" value="F:oxidoreductase activity"/>
    <property type="evidence" value="ECO:0007669"/>
    <property type="project" value="UniProtKB-KW"/>
</dbReference>
<dbReference type="GO" id="GO:0006119">
    <property type="term" value="P:oxidative phosphorylation"/>
    <property type="evidence" value="ECO:0007669"/>
    <property type="project" value="UniProtKB-UniPathway"/>
</dbReference>
<dbReference type="GO" id="GO:1902600">
    <property type="term" value="P:proton transmembrane transport"/>
    <property type="evidence" value="ECO:0007669"/>
    <property type="project" value="UniProtKB-KW"/>
</dbReference>
<dbReference type="Gene3D" id="6.10.280.130">
    <property type="match status" value="1"/>
</dbReference>
<dbReference type="Gene3D" id="1.10.760.10">
    <property type="entry name" value="Cytochrome c-like domain"/>
    <property type="match status" value="2"/>
</dbReference>
<dbReference type="InterPro" id="IPR032858">
    <property type="entry name" value="CcoP_N"/>
</dbReference>
<dbReference type="InterPro" id="IPR038414">
    <property type="entry name" value="CcoP_N_sf"/>
</dbReference>
<dbReference type="InterPro" id="IPR009056">
    <property type="entry name" value="Cyt_c-like_dom"/>
</dbReference>
<dbReference type="InterPro" id="IPR036909">
    <property type="entry name" value="Cyt_c-like_dom_sf"/>
</dbReference>
<dbReference type="InterPro" id="IPR008168">
    <property type="entry name" value="Cyt_C_IC"/>
</dbReference>
<dbReference type="InterPro" id="IPR004678">
    <property type="entry name" value="Cyt_c_oxidase_cbb3_su3"/>
</dbReference>
<dbReference type="InterPro" id="IPR050597">
    <property type="entry name" value="Cytochrome_c_Oxidase_Subunit"/>
</dbReference>
<dbReference type="NCBIfam" id="TIGR00782">
    <property type="entry name" value="ccoP"/>
    <property type="match status" value="1"/>
</dbReference>
<dbReference type="PANTHER" id="PTHR33751">
    <property type="entry name" value="CBB3-TYPE CYTOCHROME C OXIDASE SUBUNIT FIXP"/>
    <property type="match status" value="1"/>
</dbReference>
<dbReference type="PANTHER" id="PTHR33751:SF1">
    <property type="entry name" value="CBB3-TYPE CYTOCHROME C OXIDASE SUBUNIT FIXP"/>
    <property type="match status" value="1"/>
</dbReference>
<dbReference type="Pfam" id="PF13442">
    <property type="entry name" value="Cytochrome_CBB3"/>
    <property type="match status" value="2"/>
</dbReference>
<dbReference type="Pfam" id="PF14715">
    <property type="entry name" value="FixP_N"/>
    <property type="match status" value="1"/>
</dbReference>
<dbReference type="PIRSF" id="PIRSF000006">
    <property type="entry name" value="Cbb3-Cox_fixP"/>
    <property type="match status" value="1"/>
</dbReference>
<dbReference type="PRINTS" id="PR00605">
    <property type="entry name" value="CYTCHROMECIC"/>
</dbReference>
<dbReference type="SUPFAM" id="SSF46626">
    <property type="entry name" value="Cytochrome c"/>
    <property type="match status" value="2"/>
</dbReference>
<dbReference type="PROSITE" id="PS51007">
    <property type="entry name" value="CYTC"/>
    <property type="match status" value="2"/>
</dbReference>
<geneLocation type="plasmid">
    <name>sym p42d</name>
</geneLocation>
<accession>Q8KLH5</accession>
<accession>O69780</accession>
<organism>
    <name type="scientific">Rhizobium etli (strain ATCC 51251 / DSM 11541 / JCM 21823 / NBRC 15573 / CFN 42)</name>
    <dbReference type="NCBI Taxonomy" id="347834"/>
    <lineage>
        <taxon>Bacteria</taxon>
        <taxon>Pseudomonadati</taxon>
        <taxon>Pseudomonadota</taxon>
        <taxon>Alphaproteobacteria</taxon>
        <taxon>Hyphomicrobiales</taxon>
        <taxon>Rhizobiaceae</taxon>
        <taxon>Rhizobium/Agrobacterium group</taxon>
        <taxon>Rhizobium</taxon>
    </lineage>
</organism>